<name>MURG_PASMU</name>
<feature type="chain" id="PRO_0000109194" description="UDP-N-acetylglucosamine--N-acetylmuramyl-(pentapeptide) pyrophosphoryl-undecaprenol N-acetylglucosamine transferase">
    <location>
        <begin position="1"/>
        <end position="354"/>
    </location>
</feature>
<feature type="binding site" evidence="1">
    <location>
        <begin position="15"/>
        <end position="17"/>
    </location>
    <ligand>
        <name>UDP-N-acetyl-alpha-D-glucosamine</name>
        <dbReference type="ChEBI" id="CHEBI:57705"/>
    </ligand>
</feature>
<feature type="binding site" evidence="1">
    <location>
        <position position="127"/>
    </location>
    <ligand>
        <name>UDP-N-acetyl-alpha-D-glucosamine</name>
        <dbReference type="ChEBI" id="CHEBI:57705"/>
    </ligand>
</feature>
<feature type="binding site" evidence="1">
    <location>
        <position position="163"/>
    </location>
    <ligand>
        <name>UDP-N-acetyl-alpha-D-glucosamine</name>
        <dbReference type="ChEBI" id="CHEBI:57705"/>
    </ligand>
</feature>
<feature type="binding site" evidence="1">
    <location>
        <position position="191"/>
    </location>
    <ligand>
        <name>UDP-N-acetyl-alpha-D-glucosamine</name>
        <dbReference type="ChEBI" id="CHEBI:57705"/>
    </ligand>
</feature>
<feature type="binding site" evidence="1">
    <location>
        <position position="242"/>
    </location>
    <ligand>
        <name>UDP-N-acetyl-alpha-D-glucosamine</name>
        <dbReference type="ChEBI" id="CHEBI:57705"/>
    </ligand>
</feature>
<feature type="binding site" evidence="1">
    <location>
        <begin position="261"/>
        <end position="266"/>
    </location>
    <ligand>
        <name>UDP-N-acetyl-alpha-D-glucosamine</name>
        <dbReference type="ChEBI" id="CHEBI:57705"/>
    </ligand>
</feature>
<feature type="binding site" evidence="1">
    <location>
        <position position="286"/>
    </location>
    <ligand>
        <name>UDP-N-acetyl-alpha-D-glucosamine</name>
        <dbReference type="ChEBI" id="CHEBI:57705"/>
    </ligand>
</feature>
<organism>
    <name type="scientific">Pasteurella multocida (strain Pm70)</name>
    <dbReference type="NCBI Taxonomy" id="272843"/>
    <lineage>
        <taxon>Bacteria</taxon>
        <taxon>Pseudomonadati</taxon>
        <taxon>Pseudomonadota</taxon>
        <taxon>Gammaproteobacteria</taxon>
        <taxon>Pasteurellales</taxon>
        <taxon>Pasteurellaceae</taxon>
        <taxon>Pasteurella</taxon>
    </lineage>
</organism>
<comment type="function">
    <text evidence="1">Cell wall formation. Catalyzes the transfer of a GlcNAc subunit on undecaprenyl-pyrophosphoryl-MurNAc-pentapeptide (lipid intermediate I) to form undecaprenyl-pyrophosphoryl-MurNAc-(pentapeptide)GlcNAc (lipid intermediate II).</text>
</comment>
<comment type="catalytic activity">
    <reaction evidence="1">
        <text>di-trans,octa-cis-undecaprenyl diphospho-N-acetyl-alpha-D-muramoyl-L-alanyl-D-glutamyl-meso-2,6-diaminopimeloyl-D-alanyl-D-alanine + UDP-N-acetyl-alpha-D-glucosamine = di-trans,octa-cis-undecaprenyl diphospho-[N-acetyl-alpha-D-glucosaminyl-(1-&gt;4)]-N-acetyl-alpha-D-muramoyl-L-alanyl-D-glutamyl-meso-2,6-diaminopimeloyl-D-alanyl-D-alanine + UDP + H(+)</text>
        <dbReference type="Rhea" id="RHEA:31227"/>
        <dbReference type="ChEBI" id="CHEBI:15378"/>
        <dbReference type="ChEBI" id="CHEBI:57705"/>
        <dbReference type="ChEBI" id="CHEBI:58223"/>
        <dbReference type="ChEBI" id="CHEBI:61387"/>
        <dbReference type="ChEBI" id="CHEBI:61388"/>
        <dbReference type="EC" id="2.4.1.227"/>
    </reaction>
</comment>
<comment type="pathway">
    <text evidence="1">Cell wall biogenesis; peptidoglycan biosynthesis.</text>
</comment>
<comment type="subcellular location">
    <subcellularLocation>
        <location evidence="1">Cell inner membrane</location>
        <topology evidence="1">Peripheral membrane protein</topology>
        <orientation evidence="1">Cytoplasmic side</orientation>
    </subcellularLocation>
</comment>
<comment type="similarity">
    <text evidence="1">Belongs to the glycosyltransferase 28 family. MurG subfamily.</text>
</comment>
<proteinExistence type="inferred from homology"/>
<evidence type="ECO:0000255" key="1">
    <source>
        <dbReference type="HAMAP-Rule" id="MF_00033"/>
    </source>
</evidence>
<dbReference type="EC" id="2.4.1.227" evidence="1"/>
<dbReference type="EMBL" id="AE004439">
    <property type="protein sequence ID" value="AAK02226.1"/>
    <property type="molecule type" value="Genomic_DNA"/>
</dbReference>
<dbReference type="RefSeq" id="WP_005723040.1">
    <property type="nucleotide sequence ID" value="NC_002663.1"/>
</dbReference>
<dbReference type="SMR" id="P57817"/>
<dbReference type="STRING" id="272843.PM0142"/>
<dbReference type="CAZy" id="GT28">
    <property type="family name" value="Glycosyltransferase Family 28"/>
</dbReference>
<dbReference type="EnsemblBacteria" id="AAK02226">
    <property type="protein sequence ID" value="AAK02226"/>
    <property type="gene ID" value="PM0142"/>
</dbReference>
<dbReference type="KEGG" id="pmu:PM0142"/>
<dbReference type="PATRIC" id="fig|272843.6.peg.147"/>
<dbReference type="HOGENOM" id="CLU_037404_2_0_6"/>
<dbReference type="OrthoDB" id="9808936at2"/>
<dbReference type="UniPathway" id="UPA00219"/>
<dbReference type="Proteomes" id="UP000000809">
    <property type="component" value="Chromosome"/>
</dbReference>
<dbReference type="GO" id="GO:0005886">
    <property type="term" value="C:plasma membrane"/>
    <property type="evidence" value="ECO:0007669"/>
    <property type="project" value="UniProtKB-SubCell"/>
</dbReference>
<dbReference type="GO" id="GO:0051991">
    <property type="term" value="F:UDP-N-acetyl-D-glucosamine:N-acetylmuramoyl-L-alanyl-D-glutamyl-meso-2,6-diaminopimelyl-D-alanyl-D-alanine-diphosphoundecaprenol 4-beta-N-acetylglucosaminlytransferase activity"/>
    <property type="evidence" value="ECO:0007669"/>
    <property type="project" value="RHEA"/>
</dbReference>
<dbReference type="GO" id="GO:0050511">
    <property type="term" value="F:undecaprenyldiphospho-muramoylpentapeptide beta-N-acetylglucosaminyltransferase activity"/>
    <property type="evidence" value="ECO:0007669"/>
    <property type="project" value="UniProtKB-UniRule"/>
</dbReference>
<dbReference type="GO" id="GO:0005975">
    <property type="term" value="P:carbohydrate metabolic process"/>
    <property type="evidence" value="ECO:0007669"/>
    <property type="project" value="InterPro"/>
</dbReference>
<dbReference type="GO" id="GO:0051301">
    <property type="term" value="P:cell division"/>
    <property type="evidence" value="ECO:0007669"/>
    <property type="project" value="UniProtKB-KW"/>
</dbReference>
<dbReference type="GO" id="GO:0071555">
    <property type="term" value="P:cell wall organization"/>
    <property type="evidence" value="ECO:0007669"/>
    <property type="project" value="UniProtKB-KW"/>
</dbReference>
<dbReference type="GO" id="GO:0030259">
    <property type="term" value="P:lipid glycosylation"/>
    <property type="evidence" value="ECO:0007669"/>
    <property type="project" value="UniProtKB-UniRule"/>
</dbReference>
<dbReference type="GO" id="GO:0009252">
    <property type="term" value="P:peptidoglycan biosynthetic process"/>
    <property type="evidence" value="ECO:0007669"/>
    <property type="project" value="UniProtKB-UniRule"/>
</dbReference>
<dbReference type="GO" id="GO:0008360">
    <property type="term" value="P:regulation of cell shape"/>
    <property type="evidence" value="ECO:0007669"/>
    <property type="project" value="UniProtKB-KW"/>
</dbReference>
<dbReference type="CDD" id="cd03785">
    <property type="entry name" value="GT28_MurG"/>
    <property type="match status" value="1"/>
</dbReference>
<dbReference type="Gene3D" id="3.40.50.2000">
    <property type="entry name" value="Glycogen Phosphorylase B"/>
    <property type="match status" value="2"/>
</dbReference>
<dbReference type="HAMAP" id="MF_00033">
    <property type="entry name" value="MurG"/>
    <property type="match status" value="1"/>
</dbReference>
<dbReference type="InterPro" id="IPR006009">
    <property type="entry name" value="GlcNAc_MurG"/>
</dbReference>
<dbReference type="InterPro" id="IPR007235">
    <property type="entry name" value="Glyco_trans_28_C"/>
</dbReference>
<dbReference type="InterPro" id="IPR004276">
    <property type="entry name" value="GlycoTrans_28_N"/>
</dbReference>
<dbReference type="NCBIfam" id="TIGR01133">
    <property type="entry name" value="murG"/>
    <property type="match status" value="1"/>
</dbReference>
<dbReference type="PANTHER" id="PTHR21015:SF22">
    <property type="entry name" value="GLYCOSYLTRANSFERASE"/>
    <property type="match status" value="1"/>
</dbReference>
<dbReference type="PANTHER" id="PTHR21015">
    <property type="entry name" value="UDP-N-ACETYLGLUCOSAMINE--N-ACETYLMURAMYL-(PENTAPEPTIDE) PYROPHOSPHORYL-UNDECAPRENOL N-ACETYLGLUCOSAMINE TRANSFERASE 1"/>
    <property type="match status" value="1"/>
</dbReference>
<dbReference type="Pfam" id="PF04101">
    <property type="entry name" value="Glyco_tran_28_C"/>
    <property type="match status" value="1"/>
</dbReference>
<dbReference type="Pfam" id="PF03033">
    <property type="entry name" value="Glyco_transf_28"/>
    <property type="match status" value="1"/>
</dbReference>
<dbReference type="SUPFAM" id="SSF53756">
    <property type="entry name" value="UDP-Glycosyltransferase/glycogen phosphorylase"/>
    <property type="match status" value="1"/>
</dbReference>
<keyword id="KW-0131">Cell cycle</keyword>
<keyword id="KW-0132">Cell division</keyword>
<keyword id="KW-0997">Cell inner membrane</keyword>
<keyword id="KW-1003">Cell membrane</keyword>
<keyword id="KW-0133">Cell shape</keyword>
<keyword id="KW-0961">Cell wall biogenesis/degradation</keyword>
<keyword id="KW-0328">Glycosyltransferase</keyword>
<keyword id="KW-0472">Membrane</keyword>
<keyword id="KW-0573">Peptidoglycan synthesis</keyword>
<keyword id="KW-1185">Reference proteome</keyword>
<keyword id="KW-0808">Transferase</keyword>
<gene>
    <name evidence="1" type="primary">murG</name>
    <name type="ordered locus">PM0142</name>
</gene>
<reference key="1">
    <citation type="journal article" date="2001" name="Proc. Natl. Acad. Sci. U.S.A.">
        <title>Complete genomic sequence of Pasteurella multocida Pm70.</title>
        <authorList>
            <person name="May B.J."/>
            <person name="Zhang Q."/>
            <person name="Li L.L."/>
            <person name="Paustian M.L."/>
            <person name="Whittam T.S."/>
            <person name="Kapur V."/>
        </authorList>
    </citation>
    <scope>NUCLEOTIDE SEQUENCE [LARGE SCALE GENOMIC DNA]</scope>
    <source>
        <strain>Pm70</strain>
    </source>
</reference>
<protein>
    <recommendedName>
        <fullName evidence="1">UDP-N-acetylglucosamine--N-acetylmuramyl-(pentapeptide) pyrophosphoryl-undecaprenol N-acetylglucosamine transferase</fullName>
        <ecNumber evidence="1">2.4.1.227</ecNumber>
    </recommendedName>
    <alternativeName>
        <fullName evidence="1">Undecaprenyl-PP-MurNAc-pentapeptide-UDPGlcNAc GlcNAc transferase</fullName>
    </alternativeName>
</protein>
<accession>P57817</accession>
<sequence>MSEQKKRLLVMAGGTGGHVFPAIAVAQYLQQQGWDICWLGTADRMEAQLVPKHHIPIQFIQISGLRGKGIKALLSAPFSIFRAILQARKIIKAYQPHAVLGMGGYVSGPGGIAAKLCGIPVILHEQNAVAGLTNSWLAKIARRVLQAFPTAFPNAEVVGNPVRQTLFSQPTPEQRFAGREGKLRVLVVGGSQGARVLNQTLPNVVAQLSDKLEVRHQVGQGAVEQVTTLYPEHASVTITEFIDNMADAYAWADIVICRSGALTVSELAAVGAAAIFVPFQHKDQQQYLNAKYLADAGAATIIPQAELTAEKLVSVLTQFDRETLQQMAIKAKAMATPLAAQRVAEVIIEEANQD</sequence>